<keyword id="KW-0067">ATP-binding</keyword>
<keyword id="KW-0143">Chaperone</keyword>
<keyword id="KW-0479">Metal-binding</keyword>
<keyword id="KW-0547">Nucleotide-binding</keyword>
<keyword id="KW-0862">Zinc</keyword>
<accession>B2T404</accession>
<gene>
    <name evidence="1" type="primary">clpX</name>
    <name type="ordered locus">Bphyt_1907</name>
</gene>
<sequence length="423" mass="46411">MADKKGSNSEKLLYCSFCGKSQHEVKKLIAGPSVFICDECIDLCNEIIRDEAAGAGIEAGLSKSDLPSPQEIREILDQYVIGQERAKKILAVAVYNHYKRLKHLDKKDEIELSKSNILLIGPTGSGKTLLAQTLARLLNVPFVIADATTLTEAGYVGEDVENIIQKLLQNCNYEVDKAQRGIVYIDEIDKISRKSDNPSITRDVSGEGVQQALLKLVEGTMASVPPQGGRKHPNQDFIQVDTTNILFICGGAFDGLEKVIVDRTEKTGIGFGASVKSKQDRDAGEVLREVEPEDLIKFGLIPELIGRLPVVATLGKLDEVALMKILVEPKNALVKQYHKLFNMERVELEIRPAALQAVARKAIRRKTGARGLRSILEQALLDVMYDLPQMKGVSKVIIDDNVIDGDGKPLLIYEDAPKVAGSN</sequence>
<feature type="chain" id="PRO_1000097932" description="ATP-dependent Clp protease ATP-binding subunit ClpX">
    <location>
        <begin position="1"/>
        <end position="423"/>
    </location>
</feature>
<feature type="domain" description="ClpX-type ZB" evidence="2">
    <location>
        <begin position="3"/>
        <end position="56"/>
    </location>
</feature>
<feature type="binding site" evidence="2">
    <location>
        <position position="15"/>
    </location>
    <ligand>
        <name>Zn(2+)</name>
        <dbReference type="ChEBI" id="CHEBI:29105"/>
    </ligand>
</feature>
<feature type="binding site" evidence="2">
    <location>
        <position position="18"/>
    </location>
    <ligand>
        <name>Zn(2+)</name>
        <dbReference type="ChEBI" id="CHEBI:29105"/>
    </ligand>
</feature>
<feature type="binding site" evidence="2">
    <location>
        <position position="37"/>
    </location>
    <ligand>
        <name>Zn(2+)</name>
        <dbReference type="ChEBI" id="CHEBI:29105"/>
    </ligand>
</feature>
<feature type="binding site" evidence="2">
    <location>
        <position position="40"/>
    </location>
    <ligand>
        <name>Zn(2+)</name>
        <dbReference type="ChEBI" id="CHEBI:29105"/>
    </ligand>
</feature>
<feature type="binding site" evidence="1">
    <location>
        <begin position="122"/>
        <end position="129"/>
    </location>
    <ligand>
        <name>ATP</name>
        <dbReference type="ChEBI" id="CHEBI:30616"/>
    </ligand>
</feature>
<protein>
    <recommendedName>
        <fullName evidence="1">ATP-dependent Clp protease ATP-binding subunit ClpX</fullName>
    </recommendedName>
</protein>
<comment type="function">
    <text evidence="1">ATP-dependent specificity component of the Clp protease. It directs the protease to specific substrates. Can perform chaperone functions in the absence of ClpP.</text>
</comment>
<comment type="subunit">
    <text evidence="1">Component of the ClpX-ClpP complex. Forms a hexameric ring that, in the presence of ATP, binds to fourteen ClpP subunits assembled into a disk-like structure with a central cavity, resembling the structure of eukaryotic proteasomes.</text>
</comment>
<comment type="similarity">
    <text evidence="1">Belongs to the ClpX chaperone family.</text>
</comment>
<proteinExistence type="inferred from homology"/>
<name>CLPX_PARPJ</name>
<organism>
    <name type="scientific">Paraburkholderia phytofirmans (strain DSM 17436 / LMG 22146 / PsJN)</name>
    <name type="common">Burkholderia phytofirmans</name>
    <dbReference type="NCBI Taxonomy" id="398527"/>
    <lineage>
        <taxon>Bacteria</taxon>
        <taxon>Pseudomonadati</taxon>
        <taxon>Pseudomonadota</taxon>
        <taxon>Betaproteobacteria</taxon>
        <taxon>Burkholderiales</taxon>
        <taxon>Burkholderiaceae</taxon>
        <taxon>Paraburkholderia</taxon>
    </lineage>
</organism>
<reference key="1">
    <citation type="journal article" date="2011" name="J. Bacteriol.">
        <title>Complete genome sequence of the plant growth-promoting endophyte Burkholderia phytofirmans strain PsJN.</title>
        <authorList>
            <person name="Weilharter A."/>
            <person name="Mitter B."/>
            <person name="Shin M.V."/>
            <person name="Chain P.S."/>
            <person name="Nowak J."/>
            <person name="Sessitsch A."/>
        </authorList>
    </citation>
    <scope>NUCLEOTIDE SEQUENCE [LARGE SCALE GENOMIC DNA]</scope>
    <source>
        <strain>DSM 17436 / LMG 22146 / PsJN</strain>
    </source>
</reference>
<evidence type="ECO:0000255" key="1">
    <source>
        <dbReference type="HAMAP-Rule" id="MF_00175"/>
    </source>
</evidence>
<evidence type="ECO:0000255" key="2">
    <source>
        <dbReference type="PROSITE-ProRule" id="PRU01250"/>
    </source>
</evidence>
<dbReference type="EMBL" id="CP001052">
    <property type="protein sequence ID" value="ACD16315.1"/>
    <property type="molecule type" value="Genomic_DNA"/>
</dbReference>
<dbReference type="RefSeq" id="WP_007182009.1">
    <property type="nucleotide sequence ID" value="NC_010681.1"/>
</dbReference>
<dbReference type="SMR" id="B2T404"/>
<dbReference type="STRING" id="398527.Bphyt_1907"/>
<dbReference type="GeneID" id="97305297"/>
<dbReference type="KEGG" id="bpy:Bphyt_1907"/>
<dbReference type="eggNOG" id="COG1219">
    <property type="taxonomic scope" value="Bacteria"/>
</dbReference>
<dbReference type="HOGENOM" id="CLU_014218_8_2_4"/>
<dbReference type="OrthoDB" id="9804062at2"/>
<dbReference type="Proteomes" id="UP000001739">
    <property type="component" value="Chromosome 1"/>
</dbReference>
<dbReference type="GO" id="GO:0009376">
    <property type="term" value="C:HslUV protease complex"/>
    <property type="evidence" value="ECO:0007669"/>
    <property type="project" value="TreeGrafter"/>
</dbReference>
<dbReference type="GO" id="GO:0005524">
    <property type="term" value="F:ATP binding"/>
    <property type="evidence" value="ECO:0007669"/>
    <property type="project" value="UniProtKB-UniRule"/>
</dbReference>
<dbReference type="GO" id="GO:0016887">
    <property type="term" value="F:ATP hydrolysis activity"/>
    <property type="evidence" value="ECO:0007669"/>
    <property type="project" value="InterPro"/>
</dbReference>
<dbReference type="GO" id="GO:0140662">
    <property type="term" value="F:ATP-dependent protein folding chaperone"/>
    <property type="evidence" value="ECO:0007669"/>
    <property type="project" value="InterPro"/>
</dbReference>
<dbReference type="GO" id="GO:0046983">
    <property type="term" value="F:protein dimerization activity"/>
    <property type="evidence" value="ECO:0007669"/>
    <property type="project" value="InterPro"/>
</dbReference>
<dbReference type="GO" id="GO:0051082">
    <property type="term" value="F:unfolded protein binding"/>
    <property type="evidence" value="ECO:0007669"/>
    <property type="project" value="UniProtKB-UniRule"/>
</dbReference>
<dbReference type="GO" id="GO:0008270">
    <property type="term" value="F:zinc ion binding"/>
    <property type="evidence" value="ECO:0007669"/>
    <property type="project" value="InterPro"/>
</dbReference>
<dbReference type="GO" id="GO:0051301">
    <property type="term" value="P:cell division"/>
    <property type="evidence" value="ECO:0007669"/>
    <property type="project" value="TreeGrafter"/>
</dbReference>
<dbReference type="GO" id="GO:0051603">
    <property type="term" value="P:proteolysis involved in protein catabolic process"/>
    <property type="evidence" value="ECO:0007669"/>
    <property type="project" value="TreeGrafter"/>
</dbReference>
<dbReference type="CDD" id="cd19497">
    <property type="entry name" value="RecA-like_ClpX"/>
    <property type="match status" value="1"/>
</dbReference>
<dbReference type="FunFam" id="1.10.8.60:FF:000002">
    <property type="entry name" value="ATP-dependent Clp protease ATP-binding subunit ClpX"/>
    <property type="match status" value="1"/>
</dbReference>
<dbReference type="FunFam" id="3.40.50.300:FF:000005">
    <property type="entry name" value="ATP-dependent Clp protease ATP-binding subunit ClpX"/>
    <property type="match status" value="1"/>
</dbReference>
<dbReference type="Gene3D" id="1.10.8.60">
    <property type="match status" value="1"/>
</dbReference>
<dbReference type="Gene3D" id="6.20.220.10">
    <property type="entry name" value="ClpX chaperone, C4-type zinc finger domain"/>
    <property type="match status" value="1"/>
</dbReference>
<dbReference type="Gene3D" id="3.40.50.300">
    <property type="entry name" value="P-loop containing nucleotide triphosphate hydrolases"/>
    <property type="match status" value="1"/>
</dbReference>
<dbReference type="HAMAP" id="MF_00175">
    <property type="entry name" value="ClpX"/>
    <property type="match status" value="1"/>
</dbReference>
<dbReference type="InterPro" id="IPR003593">
    <property type="entry name" value="AAA+_ATPase"/>
</dbReference>
<dbReference type="InterPro" id="IPR050052">
    <property type="entry name" value="ATP-dep_Clp_protease_ClpX"/>
</dbReference>
<dbReference type="InterPro" id="IPR003959">
    <property type="entry name" value="ATPase_AAA_core"/>
</dbReference>
<dbReference type="InterPro" id="IPR019489">
    <property type="entry name" value="Clp_ATPase_C"/>
</dbReference>
<dbReference type="InterPro" id="IPR004487">
    <property type="entry name" value="Clp_protease_ATP-bd_su_ClpX"/>
</dbReference>
<dbReference type="InterPro" id="IPR046425">
    <property type="entry name" value="ClpX_bact"/>
</dbReference>
<dbReference type="InterPro" id="IPR027417">
    <property type="entry name" value="P-loop_NTPase"/>
</dbReference>
<dbReference type="InterPro" id="IPR010603">
    <property type="entry name" value="Znf_CppX_C4"/>
</dbReference>
<dbReference type="InterPro" id="IPR038366">
    <property type="entry name" value="Znf_CppX_C4_sf"/>
</dbReference>
<dbReference type="NCBIfam" id="TIGR00382">
    <property type="entry name" value="clpX"/>
    <property type="match status" value="1"/>
</dbReference>
<dbReference type="NCBIfam" id="NF003745">
    <property type="entry name" value="PRK05342.1"/>
    <property type="match status" value="1"/>
</dbReference>
<dbReference type="PANTHER" id="PTHR48102:SF7">
    <property type="entry name" value="ATP-DEPENDENT CLP PROTEASE ATP-BINDING SUBUNIT CLPX-LIKE, MITOCHONDRIAL"/>
    <property type="match status" value="1"/>
</dbReference>
<dbReference type="PANTHER" id="PTHR48102">
    <property type="entry name" value="ATP-DEPENDENT CLP PROTEASE ATP-BINDING SUBUNIT CLPX-LIKE, MITOCHONDRIAL-RELATED"/>
    <property type="match status" value="1"/>
</dbReference>
<dbReference type="Pfam" id="PF07724">
    <property type="entry name" value="AAA_2"/>
    <property type="match status" value="1"/>
</dbReference>
<dbReference type="Pfam" id="PF10431">
    <property type="entry name" value="ClpB_D2-small"/>
    <property type="match status" value="1"/>
</dbReference>
<dbReference type="Pfam" id="PF06689">
    <property type="entry name" value="zf-C4_ClpX"/>
    <property type="match status" value="1"/>
</dbReference>
<dbReference type="SMART" id="SM00382">
    <property type="entry name" value="AAA"/>
    <property type="match status" value="1"/>
</dbReference>
<dbReference type="SMART" id="SM01086">
    <property type="entry name" value="ClpB_D2-small"/>
    <property type="match status" value="1"/>
</dbReference>
<dbReference type="SMART" id="SM00994">
    <property type="entry name" value="zf-C4_ClpX"/>
    <property type="match status" value="1"/>
</dbReference>
<dbReference type="SUPFAM" id="SSF57716">
    <property type="entry name" value="Glucocorticoid receptor-like (DNA-binding domain)"/>
    <property type="match status" value="1"/>
</dbReference>
<dbReference type="SUPFAM" id="SSF52540">
    <property type="entry name" value="P-loop containing nucleoside triphosphate hydrolases"/>
    <property type="match status" value="1"/>
</dbReference>
<dbReference type="PROSITE" id="PS51902">
    <property type="entry name" value="CLPX_ZB"/>
    <property type="match status" value="1"/>
</dbReference>